<sequence>MSQVPTTYSFDAPTDFINFSSLDAEEDTENIDSWFDEKANLENKFLRQRGIGEPFQGKNSLRKAKLQQGFVTPLKAVDNTYHKETEKENLQKQSIPSNDCSSLDAKRAVSGNTPVQPQRRSIRLSAQKDLEQKEKNHVASVEMKAKRCVAPATDCPPQKRMKVSHKKKLEEEEEGSAPATSRKNERETLEKAKGKHTVPGVPPAREKVLKSTEEQEIEKRLRMQQEVVELRRKNEEFKKLALAGPGQPVKKSTSQVTKTVDFHFLTDERIKQHPKNQEEYKEVNFMSELRKHSSTPARGTRGCTIIKPFNLSKGKKRTFDEAASTYVPIAQQVEAFHKRTPNRYHLRNKKDESLLPSKSVNKIARDPQTPILQTKYRTRAVTCKSTAEQEAEELEKLQQYKFKARELDPRIFESGPILPKRAPVKPPTQPVGFDLEIEKRIHERESKKKTEDEQFEFHSRPCPTKILEDVVGVPEKKVIPATVPKSPVFALKNRIRVPIKDEEEEKPVVIKAQPVPHYGVPYKPHIAEARNVEVCPFSFDTRDKERQLQKEKKIKEMQKGEVPKFKALPVPHFDTINLPEKKVKNVTQAEPFSLETDKRGAYKAEMWKHQLEEEQKQQKDAACFKARPNTVIFQEPFVPKKEKKSLAENPSGSLVQEPFQLATERRAKERQELEKKMAEVEAWKLQQLEEVRQQEEEQQKEELARLRKELVHKANPIRKYAAVEVKSSELPLTVPVSPKFSTRFQ</sequence>
<proteinExistence type="evidence at protein level"/>
<gene>
    <name type="primary">Tpx2</name>
</gene>
<keyword id="KW-0007">Acetylation</keyword>
<keyword id="KW-0053">Apoptosis</keyword>
<keyword id="KW-0131">Cell cycle</keyword>
<keyword id="KW-0132">Cell division</keyword>
<keyword id="KW-0963">Cytoplasm</keyword>
<keyword id="KW-0206">Cytoskeleton</keyword>
<keyword id="KW-1017">Isopeptide bond</keyword>
<keyword id="KW-0493">Microtubule</keyword>
<keyword id="KW-0498">Mitosis</keyword>
<keyword id="KW-0539">Nucleus</keyword>
<keyword id="KW-0597">Phosphoprotein</keyword>
<keyword id="KW-1185">Reference proteome</keyword>
<keyword id="KW-0832">Ubl conjugation</keyword>
<reference key="1">
    <citation type="journal article" date="2005" name="Science">
        <title>The transcriptional landscape of the mammalian genome.</title>
        <authorList>
            <person name="Carninci P."/>
            <person name="Kasukawa T."/>
            <person name="Katayama S."/>
            <person name="Gough J."/>
            <person name="Frith M.C."/>
            <person name="Maeda N."/>
            <person name="Oyama R."/>
            <person name="Ravasi T."/>
            <person name="Lenhard B."/>
            <person name="Wells C."/>
            <person name="Kodzius R."/>
            <person name="Shimokawa K."/>
            <person name="Bajic V.B."/>
            <person name="Brenner S.E."/>
            <person name="Batalov S."/>
            <person name="Forrest A.R."/>
            <person name="Zavolan M."/>
            <person name="Davis M.J."/>
            <person name="Wilming L.G."/>
            <person name="Aidinis V."/>
            <person name="Allen J.E."/>
            <person name="Ambesi-Impiombato A."/>
            <person name="Apweiler R."/>
            <person name="Aturaliya R.N."/>
            <person name="Bailey T.L."/>
            <person name="Bansal M."/>
            <person name="Baxter L."/>
            <person name="Beisel K.W."/>
            <person name="Bersano T."/>
            <person name="Bono H."/>
            <person name="Chalk A.M."/>
            <person name="Chiu K.P."/>
            <person name="Choudhary V."/>
            <person name="Christoffels A."/>
            <person name="Clutterbuck D.R."/>
            <person name="Crowe M.L."/>
            <person name="Dalla E."/>
            <person name="Dalrymple B.P."/>
            <person name="de Bono B."/>
            <person name="Della Gatta G."/>
            <person name="di Bernardo D."/>
            <person name="Down T."/>
            <person name="Engstrom P."/>
            <person name="Fagiolini M."/>
            <person name="Faulkner G."/>
            <person name="Fletcher C.F."/>
            <person name="Fukushima T."/>
            <person name="Furuno M."/>
            <person name="Futaki S."/>
            <person name="Gariboldi M."/>
            <person name="Georgii-Hemming P."/>
            <person name="Gingeras T.R."/>
            <person name="Gojobori T."/>
            <person name="Green R.E."/>
            <person name="Gustincich S."/>
            <person name="Harbers M."/>
            <person name="Hayashi Y."/>
            <person name="Hensch T.K."/>
            <person name="Hirokawa N."/>
            <person name="Hill D."/>
            <person name="Huminiecki L."/>
            <person name="Iacono M."/>
            <person name="Ikeo K."/>
            <person name="Iwama A."/>
            <person name="Ishikawa T."/>
            <person name="Jakt M."/>
            <person name="Kanapin A."/>
            <person name="Katoh M."/>
            <person name="Kawasawa Y."/>
            <person name="Kelso J."/>
            <person name="Kitamura H."/>
            <person name="Kitano H."/>
            <person name="Kollias G."/>
            <person name="Krishnan S.P."/>
            <person name="Kruger A."/>
            <person name="Kummerfeld S.K."/>
            <person name="Kurochkin I.V."/>
            <person name="Lareau L.F."/>
            <person name="Lazarevic D."/>
            <person name="Lipovich L."/>
            <person name="Liu J."/>
            <person name="Liuni S."/>
            <person name="McWilliam S."/>
            <person name="Madan Babu M."/>
            <person name="Madera M."/>
            <person name="Marchionni L."/>
            <person name="Matsuda H."/>
            <person name="Matsuzawa S."/>
            <person name="Miki H."/>
            <person name="Mignone F."/>
            <person name="Miyake S."/>
            <person name="Morris K."/>
            <person name="Mottagui-Tabar S."/>
            <person name="Mulder N."/>
            <person name="Nakano N."/>
            <person name="Nakauchi H."/>
            <person name="Ng P."/>
            <person name="Nilsson R."/>
            <person name="Nishiguchi S."/>
            <person name="Nishikawa S."/>
            <person name="Nori F."/>
            <person name="Ohara O."/>
            <person name="Okazaki Y."/>
            <person name="Orlando V."/>
            <person name="Pang K.C."/>
            <person name="Pavan W.J."/>
            <person name="Pavesi G."/>
            <person name="Pesole G."/>
            <person name="Petrovsky N."/>
            <person name="Piazza S."/>
            <person name="Reed J."/>
            <person name="Reid J.F."/>
            <person name="Ring B.Z."/>
            <person name="Ringwald M."/>
            <person name="Rost B."/>
            <person name="Ruan Y."/>
            <person name="Salzberg S.L."/>
            <person name="Sandelin A."/>
            <person name="Schneider C."/>
            <person name="Schoenbach C."/>
            <person name="Sekiguchi K."/>
            <person name="Semple C.A."/>
            <person name="Seno S."/>
            <person name="Sessa L."/>
            <person name="Sheng Y."/>
            <person name="Shibata Y."/>
            <person name="Shimada H."/>
            <person name="Shimada K."/>
            <person name="Silva D."/>
            <person name="Sinclair B."/>
            <person name="Sperling S."/>
            <person name="Stupka E."/>
            <person name="Sugiura K."/>
            <person name="Sultana R."/>
            <person name="Takenaka Y."/>
            <person name="Taki K."/>
            <person name="Tammoja K."/>
            <person name="Tan S.L."/>
            <person name="Tang S."/>
            <person name="Taylor M.S."/>
            <person name="Tegner J."/>
            <person name="Teichmann S.A."/>
            <person name="Ueda H.R."/>
            <person name="van Nimwegen E."/>
            <person name="Verardo R."/>
            <person name="Wei C.L."/>
            <person name="Yagi K."/>
            <person name="Yamanishi H."/>
            <person name="Zabarovsky E."/>
            <person name="Zhu S."/>
            <person name="Zimmer A."/>
            <person name="Hide W."/>
            <person name="Bult C."/>
            <person name="Grimmond S.M."/>
            <person name="Teasdale R.D."/>
            <person name="Liu E.T."/>
            <person name="Brusic V."/>
            <person name="Quackenbush J."/>
            <person name="Wahlestedt C."/>
            <person name="Mattick J.S."/>
            <person name="Hume D.A."/>
            <person name="Kai C."/>
            <person name="Sasaki D."/>
            <person name="Tomaru Y."/>
            <person name="Fukuda S."/>
            <person name="Kanamori-Katayama M."/>
            <person name="Suzuki M."/>
            <person name="Aoki J."/>
            <person name="Arakawa T."/>
            <person name="Iida J."/>
            <person name="Imamura K."/>
            <person name="Itoh M."/>
            <person name="Kato T."/>
            <person name="Kawaji H."/>
            <person name="Kawagashira N."/>
            <person name="Kawashima T."/>
            <person name="Kojima M."/>
            <person name="Kondo S."/>
            <person name="Konno H."/>
            <person name="Nakano K."/>
            <person name="Ninomiya N."/>
            <person name="Nishio T."/>
            <person name="Okada M."/>
            <person name="Plessy C."/>
            <person name="Shibata K."/>
            <person name="Shiraki T."/>
            <person name="Suzuki S."/>
            <person name="Tagami M."/>
            <person name="Waki K."/>
            <person name="Watahiki A."/>
            <person name="Okamura-Oho Y."/>
            <person name="Suzuki H."/>
            <person name="Kawai J."/>
            <person name="Hayashizaki Y."/>
        </authorList>
    </citation>
    <scope>NUCLEOTIDE SEQUENCE [LARGE SCALE MRNA]</scope>
    <source>
        <strain>NOD</strain>
        <tissue>Thymus</tissue>
    </source>
</reference>
<reference key="2">
    <citation type="journal article" date="2009" name="PLoS Biol.">
        <title>Lineage-specific biology revealed by a finished genome assembly of the mouse.</title>
        <authorList>
            <person name="Church D.M."/>
            <person name="Goodstadt L."/>
            <person name="Hillier L.W."/>
            <person name="Zody M.C."/>
            <person name="Goldstein S."/>
            <person name="She X."/>
            <person name="Bult C.J."/>
            <person name="Agarwala R."/>
            <person name="Cherry J.L."/>
            <person name="DiCuccio M."/>
            <person name="Hlavina W."/>
            <person name="Kapustin Y."/>
            <person name="Meric P."/>
            <person name="Maglott D."/>
            <person name="Birtle Z."/>
            <person name="Marques A.C."/>
            <person name="Graves T."/>
            <person name="Zhou S."/>
            <person name="Teague B."/>
            <person name="Potamousis K."/>
            <person name="Churas C."/>
            <person name="Place M."/>
            <person name="Herschleb J."/>
            <person name="Runnheim R."/>
            <person name="Forrest D."/>
            <person name="Amos-Landgraf J."/>
            <person name="Schwartz D.C."/>
            <person name="Cheng Z."/>
            <person name="Lindblad-Toh K."/>
            <person name="Eichler E.E."/>
            <person name="Ponting C.P."/>
        </authorList>
    </citation>
    <scope>NUCLEOTIDE SEQUENCE [LARGE SCALE GENOMIC DNA]</scope>
    <source>
        <strain>C57BL/6J</strain>
    </source>
</reference>
<reference key="3">
    <citation type="submission" date="2005-07" db="EMBL/GenBank/DDBJ databases">
        <authorList>
            <person name="Mural R.J."/>
            <person name="Adams M.D."/>
            <person name="Myers E.W."/>
            <person name="Smith H.O."/>
            <person name="Venter J.C."/>
        </authorList>
    </citation>
    <scope>NUCLEOTIDE SEQUENCE [LARGE SCALE GENOMIC DNA]</scope>
</reference>
<reference key="4">
    <citation type="journal article" date="2004" name="Genome Res.">
        <title>The status, quality, and expansion of the NIH full-length cDNA project: the Mammalian Gene Collection (MGC).</title>
        <authorList>
            <consortium name="The MGC Project Team"/>
        </authorList>
    </citation>
    <scope>NUCLEOTIDE SEQUENCE [LARGE SCALE MRNA]</scope>
    <source>
        <strain>C57BL/6J</strain>
        <tissue>Brain</tissue>
    </source>
</reference>
<reference key="5">
    <citation type="journal article" date="2007" name="Proc. Natl. Acad. Sci. U.S.A.">
        <title>Large-scale phosphorylation analysis of mouse liver.</title>
        <authorList>
            <person name="Villen J."/>
            <person name="Beausoleil S.A."/>
            <person name="Gerber S.A."/>
            <person name="Gygi S.P."/>
        </authorList>
    </citation>
    <scope>PHOSPHORYLATION [LARGE SCALE ANALYSIS] AT THR-72 AND SER-486</scope>
    <scope>IDENTIFICATION BY MASS SPECTROMETRY [LARGE SCALE ANALYSIS]</scope>
    <source>
        <tissue>Liver</tissue>
    </source>
</reference>
<reference key="6">
    <citation type="journal article" date="2008" name="J. Cell Biol.">
        <title>Building a spindle of the correct length in human cells requires the interaction between TPX2 and Aurora A.</title>
        <authorList>
            <person name="Bird A.W."/>
            <person name="Hyman A.A."/>
        </authorList>
    </citation>
    <scope>FUNCTION</scope>
    <scope>INTERACTION WITH AURKA</scope>
    <scope>SUBCELLULAR LOCATION</scope>
    <scope>MUTAGENESIS OF 8-TYR--ASP-11</scope>
</reference>
<reference key="7">
    <citation type="journal article" date="2009" name="Immunity">
        <title>The phagosomal proteome in interferon-gamma-activated macrophages.</title>
        <authorList>
            <person name="Trost M."/>
            <person name="English L."/>
            <person name="Lemieux S."/>
            <person name="Courcelles M."/>
            <person name="Desjardins M."/>
            <person name="Thibault P."/>
        </authorList>
    </citation>
    <scope>PHOSPHORYLATION [LARGE SCALE ANALYSIS] AT SER-737</scope>
    <scope>IDENTIFICATION BY MASS SPECTROMETRY [LARGE SCALE ANALYSIS]</scope>
</reference>
<reference key="8">
    <citation type="journal article" date="2010" name="Cell">
        <title>A tissue-specific atlas of mouse protein phosphorylation and expression.</title>
        <authorList>
            <person name="Huttlin E.L."/>
            <person name="Jedrychowski M.P."/>
            <person name="Elias J.E."/>
            <person name="Goswami T."/>
            <person name="Rad R."/>
            <person name="Beausoleil S.A."/>
            <person name="Villen J."/>
            <person name="Haas W."/>
            <person name="Sowa M.E."/>
            <person name="Gygi S.P."/>
        </authorList>
    </citation>
    <scope>PHOSPHORYLATION [LARGE SCALE ANALYSIS] AT SER-486 AND SER-737</scope>
    <scope>IDENTIFICATION BY MASS SPECTROMETRY [LARGE SCALE ANALYSIS]</scope>
    <source>
        <tissue>Lung</tissue>
        <tissue>Spleen</tissue>
        <tissue>Testis</tissue>
    </source>
</reference>
<reference key="9">
    <citation type="journal article" date="2013" name="Mol. Cell">
        <title>SIRT5-mediated lysine desuccinylation impacts diverse metabolic pathways.</title>
        <authorList>
            <person name="Park J."/>
            <person name="Chen Y."/>
            <person name="Tishkoff D.X."/>
            <person name="Peng C."/>
            <person name="Tan M."/>
            <person name="Dai L."/>
            <person name="Xie Z."/>
            <person name="Zhang Y."/>
            <person name="Zwaans B.M."/>
            <person name="Skinner M.E."/>
            <person name="Lombard D.B."/>
            <person name="Zhao Y."/>
        </authorList>
    </citation>
    <scope>ACETYLATION [LARGE SCALE ANALYSIS] AT LYS-128 AND LYS-375</scope>
    <scope>IDENTIFICATION BY MASS SPECTROMETRY [LARGE SCALE ANALYSIS]</scope>
    <source>
        <tissue>Embryonic fibroblast</tissue>
    </source>
</reference>
<reference key="10">
    <citation type="journal article" date="2016" name="Cell Cycle">
        <title>Bcl2l10, a new Tpx2 binding partner, is a master regulator of Aurora kinase A in mouse oocytes.</title>
        <authorList>
            <person name="Lee S.Y."/>
            <person name="Kim E.Y."/>
            <person name="Kim K.H."/>
            <person name="Lee K.A."/>
        </authorList>
    </citation>
    <scope>INTERACTION WITH BCL2L10</scope>
    <scope>SUBCELLULAR LOCATION</scope>
    <scope>DEVELOPMENTAL STAGE</scope>
</reference>
<name>TPX2_MOUSE</name>
<protein>
    <recommendedName>
        <fullName>Targeting protein for Xklp2</fullName>
    </recommendedName>
</protein>
<accession>A2APB8</accession>
<accession>Q3U500</accession>
<accession>Q6P9S6</accession>
<evidence type="ECO:0000250" key="1">
    <source>
        <dbReference type="UniProtKB" id="Q9ULW0"/>
    </source>
</evidence>
<evidence type="ECO:0000256" key="2">
    <source>
        <dbReference type="SAM" id="MobiDB-lite"/>
    </source>
</evidence>
<evidence type="ECO:0000269" key="3">
    <source>
    </source>
</evidence>
<evidence type="ECO:0000269" key="4">
    <source>
    </source>
</evidence>
<evidence type="ECO:0000305" key="5"/>
<evidence type="ECO:0007744" key="6">
    <source>
    </source>
</evidence>
<evidence type="ECO:0007744" key="7">
    <source>
    </source>
</evidence>
<evidence type="ECO:0007744" key="8">
    <source>
    </source>
</evidence>
<evidence type="ECO:0007744" key="9">
    <source>
    </source>
</evidence>
<dbReference type="EMBL" id="AK153957">
    <property type="protein sequence ID" value="BAE32280.1"/>
    <property type="molecule type" value="mRNA"/>
</dbReference>
<dbReference type="EMBL" id="AL833801">
    <property type="status" value="NOT_ANNOTATED_CDS"/>
    <property type="molecule type" value="Genomic_DNA"/>
</dbReference>
<dbReference type="EMBL" id="CH466551">
    <property type="protein sequence ID" value="EDL05994.1"/>
    <property type="molecule type" value="Genomic_DNA"/>
</dbReference>
<dbReference type="EMBL" id="BC060619">
    <property type="protein sequence ID" value="AAH60619.1"/>
    <property type="molecule type" value="mRNA"/>
</dbReference>
<dbReference type="CCDS" id="CCDS16900.1"/>
<dbReference type="RefSeq" id="NP_001135447.1">
    <property type="nucleotide sequence ID" value="NM_001141975.2"/>
</dbReference>
<dbReference type="RefSeq" id="NP_001135448.1">
    <property type="nucleotide sequence ID" value="NM_001141976.2"/>
</dbReference>
<dbReference type="RefSeq" id="NP_001135449.1">
    <property type="nucleotide sequence ID" value="NM_001141977.2"/>
</dbReference>
<dbReference type="RefSeq" id="NP_001135450.1">
    <property type="nucleotide sequence ID" value="NM_001141978.2"/>
</dbReference>
<dbReference type="RefSeq" id="NP_082385.3">
    <property type="nucleotide sequence ID" value="NM_028109.4"/>
</dbReference>
<dbReference type="RefSeq" id="XP_006500276.1">
    <property type="nucleotide sequence ID" value="XM_006500213.3"/>
</dbReference>
<dbReference type="RefSeq" id="XP_006500277.1">
    <property type="nucleotide sequence ID" value="XM_006500214.3"/>
</dbReference>
<dbReference type="RefSeq" id="XP_006500278.1">
    <property type="nucleotide sequence ID" value="XM_006500215.3"/>
</dbReference>
<dbReference type="SMR" id="A2APB8"/>
<dbReference type="BioGRID" id="215163">
    <property type="interactions" value="57"/>
</dbReference>
<dbReference type="FunCoup" id="A2APB8">
    <property type="interactions" value="568"/>
</dbReference>
<dbReference type="IntAct" id="A2APB8">
    <property type="interactions" value="51"/>
</dbReference>
<dbReference type="MINT" id="A2APB8"/>
<dbReference type="STRING" id="10090.ENSMUSP00000128888"/>
<dbReference type="GlyGen" id="A2APB8">
    <property type="glycosylation" value="1 site, 1 O-linked glycan (1 site)"/>
</dbReference>
<dbReference type="iPTMnet" id="A2APB8"/>
<dbReference type="PhosphoSitePlus" id="A2APB8"/>
<dbReference type="jPOST" id="A2APB8"/>
<dbReference type="PaxDb" id="10090-ENSMUSP00000128888"/>
<dbReference type="PeptideAtlas" id="A2APB8"/>
<dbReference type="ProteomicsDB" id="259077"/>
<dbReference type="Pumba" id="A2APB8"/>
<dbReference type="Antibodypedia" id="1228">
    <property type="antibodies" value="641 antibodies from 38 providers"/>
</dbReference>
<dbReference type="DNASU" id="72119"/>
<dbReference type="Ensembl" id="ENSMUST00000028969.9">
    <property type="protein sequence ID" value="ENSMUSP00000028969.9"/>
    <property type="gene ID" value="ENSMUSG00000027469.17"/>
</dbReference>
<dbReference type="Ensembl" id="ENSMUST00000109816.8">
    <property type="protein sequence ID" value="ENSMUSP00000105441.2"/>
    <property type="gene ID" value="ENSMUSG00000027469.17"/>
</dbReference>
<dbReference type="Ensembl" id="ENSMUST00000164120.8">
    <property type="protein sequence ID" value="ENSMUSP00000128888.2"/>
    <property type="gene ID" value="ENSMUSG00000027469.17"/>
</dbReference>
<dbReference type="Ensembl" id="ENSMUST00000178997.8">
    <property type="protein sequence ID" value="ENSMUSP00000136457.2"/>
    <property type="gene ID" value="ENSMUSG00000027469.17"/>
</dbReference>
<dbReference type="GeneID" id="72119"/>
<dbReference type="KEGG" id="mmu:72119"/>
<dbReference type="UCSC" id="uc008ngo.2">
    <property type="organism name" value="mouse"/>
</dbReference>
<dbReference type="AGR" id="MGI:1919369"/>
<dbReference type="CTD" id="22974"/>
<dbReference type="MGI" id="MGI:1919369">
    <property type="gene designation" value="Tpx2"/>
</dbReference>
<dbReference type="VEuPathDB" id="HostDB:ENSMUSG00000027469"/>
<dbReference type="eggNOG" id="ENOG502QVQS">
    <property type="taxonomic scope" value="Eukaryota"/>
</dbReference>
<dbReference type="GeneTree" id="ENSGT00390000009842"/>
<dbReference type="HOGENOM" id="CLU_022592_0_0_1"/>
<dbReference type="InParanoid" id="A2APB8"/>
<dbReference type="OMA" id="GRHTVSC"/>
<dbReference type="OrthoDB" id="1684416at2759"/>
<dbReference type="PhylomeDB" id="A2APB8"/>
<dbReference type="TreeFam" id="TF328997"/>
<dbReference type="Reactome" id="R-MMU-6804756">
    <property type="pathway name" value="Regulation of TP53 Activity through Phosphorylation"/>
</dbReference>
<dbReference type="Reactome" id="R-MMU-8854518">
    <property type="pathway name" value="AURKA Activation by TPX2"/>
</dbReference>
<dbReference type="BioGRID-ORCS" id="72119">
    <property type="hits" value="10 hits in 79 CRISPR screens"/>
</dbReference>
<dbReference type="ChiTaRS" id="Tpx2">
    <property type="organism name" value="mouse"/>
</dbReference>
<dbReference type="PRO" id="PR:A2APB8"/>
<dbReference type="Proteomes" id="UP000000589">
    <property type="component" value="Chromosome 2"/>
</dbReference>
<dbReference type="RNAct" id="A2APB8">
    <property type="molecule type" value="protein"/>
</dbReference>
<dbReference type="Bgee" id="ENSMUSG00000027469">
    <property type="expression patterns" value="Expressed in embryonic post-anal tail and 179 other cell types or tissues"/>
</dbReference>
<dbReference type="GO" id="GO:0005818">
    <property type="term" value="C:aster"/>
    <property type="evidence" value="ECO:0000266"/>
    <property type="project" value="MGI"/>
</dbReference>
<dbReference type="GO" id="GO:0043203">
    <property type="term" value="C:axon hillock"/>
    <property type="evidence" value="ECO:0000314"/>
    <property type="project" value="MGI"/>
</dbReference>
<dbReference type="GO" id="GO:0005737">
    <property type="term" value="C:cytoplasm"/>
    <property type="evidence" value="ECO:0007669"/>
    <property type="project" value="UniProtKB-KW"/>
</dbReference>
<dbReference type="GO" id="GO:0045171">
    <property type="term" value="C:intercellular bridge"/>
    <property type="evidence" value="ECO:0007669"/>
    <property type="project" value="Ensembl"/>
</dbReference>
<dbReference type="GO" id="GO:0005874">
    <property type="term" value="C:microtubule"/>
    <property type="evidence" value="ECO:0007669"/>
    <property type="project" value="UniProtKB-KW"/>
</dbReference>
<dbReference type="GO" id="GO:0072686">
    <property type="term" value="C:mitotic spindle"/>
    <property type="evidence" value="ECO:0000266"/>
    <property type="project" value="MGI"/>
</dbReference>
<dbReference type="GO" id="GO:0005654">
    <property type="term" value="C:nucleoplasm"/>
    <property type="evidence" value="ECO:0007669"/>
    <property type="project" value="Ensembl"/>
</dbReference>
<dbReference type="GO" id="GO:0005634">
    <property type="term" value="C:nucleus"/>
    <property type="evidence" value="ECO:0000266"/>
    <property type="project" value="MGI"/>
</dbReference>
<dbReference type="GO" id="GO:0005819">
    <property type="term" value="C:spindle"/>
    <property type="evidence" value="ECO:0000314"/>
    <property type="project" value="UniProtKB"/>
</dbReference>
<dbReference type="GO" id="GO:0000922">
    <property type="term" value="C:spindle pole"/>
    <property type="evidence" value="ECO:0007669"/>
    <property type="project" value="UniProtKB-SubCell"/>
</dbReference>
<dbReference type="GO" id="GO:0061676">
    <property type="term" value="F:importin-alpha family protein binding"/>
    <property type="evidence" value="ECO:0000314"/>
    <property type="project" value="UniProtKB"/>
</dbReference>
<dbReference type="GO" id="GO:0060090">
    <property type="term" value="F:molecular adaptor activity"/>
    <property type="evidence" value="ECO:0007669"/>
    <property type="project" value="Ensembl"/>
</dbReference>
<dbReference type="GO" id="GO:0019901">
    <property type="term" value="F:protein kinase binding"/>
    <property type="evidence" value="ECO:0000353"/>
    <property type="project" value="UniProtKB"/>
</dbReference>
<dbReference type="GO" id="GO:0032147">
    <property type="term" value="P:activation of protein kinase activity"/>
    <property type="evidence" value="ECO:0000250"/>
    <property type="project" value="UniProtKB"/>
</dbReference>
<dbReference type="GO" id="GO:0006915">
    <property type="term" value="P:apoptotic process"/>
    <property type="evidence" value="ECO:0007669"/>
    <property type="project" value="UniProtKB-KW"/>
</dbReference>
<dbReference type="GO" id="GO:0051301">
    <property type="term" value="P:cell division"/>
    <property type="evidence" value="ECO:0007669"/>
    <property type="project" value="UniProtKB-KW"/>
</dbReference>
<dbReference type="GO" id="GO:0007020">
    <property type="term" value="P:microtubule nucleation"/>
    <property type="evidence" value="ECO:0007669"/>
    <property type="project" value="Ensembl"/>
</dbReference>
<dbReference type="GO" id="GO:0090307">
    <property type="term" value="P:mitotic spindle assembly"/>
    <property type="evidence" value="ECO:0000315"/>
    <property type="project" value="UniProtKB"/>
</dbReference>
<dbReference type="GO" id="GO:0007026">
    <property type="term" value="P:negative regulation of microtubule depolymerization"/>
    <property type="evidence" value="ECO:0007669"/>
    <property type="project" value="Ensembl"/>
</dbReference>
<dbReference type="GO" id="GO:0060236">
    <property type="term" value="P:regulation of mitotic spindle organization"/>
    <property type="evidence" value="ECO:0000315"/>
    <property type="project" value="UniProtKB"/>
</dbReference>
<dbReference type="GO" id="GO:0051225">
    <property type="term" value="P:spindle assembly"/>
    <property type="evidence" value="ECO:0000266"/>
    <property type="project" value="MGI"/>
</dbReference>
<dbReference type="InterPro" id="IPR015128">
    <property type="entry name" value="Aurora-A-bd"/>
</dbReference>
<dbReference type="InterPro" id="IPR027329">
    <property type="entry name" value="TPX2_C"/>
</dbReference>
<dbReference type="InterPro" id="IPR027330">
    <property type="entry name" value="TPX2_central_dom"/>
</dbReference>
<dbReference type="InterPro" id="IPR009675">
    <property type="entry name" value="TPX2_fam"/>
</dbReference>
<dbReference type="PANTHER" id="PTHR14326">
    <property type="entry name" value="TARGETING PROTEIN FOR XKLP2"/>
    <property type="match status" value="1"/>
</dbReference>
<dbReference type="PANTHER" id="PTHR14326:SF44">
    <property type="entry name" value="TARGETING PROTEIN FOR XKLP2"/>
    <property type="match status" value="1"/>
</dbReference>
<dbReference type="Pfam" id="PF09041">
    <property type="entry name" value="Aurora-A_bind"/>
    <property type="match status" value="1"/>
</dbReference>
<dbReference type="Pfam" id="PF06886">
    <property type="entry name" value="TPX2"/>
    <property type="match status" value="2"/>
</dbReference>
<dbReference type="Pfam" id="PF12214">
    <property type="entry name" value="TPX2_importin"/>
    <property type="match status" value="1"/>
</dbReference>
<organism>
    <name type="scientific">Mus musculus</name>
    <name type="common">Mouse</name>
    <dbReference type="NCBI Taxonomy" id="10090"/>
    <lineage>
        <taxon>Eukaryota</taxon>
        <taxon>Metazoa</taxon>
        <taxon>Chordata</taxon>
        <taxon>Craniata</taxon>
        <taxon>Vertebrata</taxon>
        <taxon>Euteleostomi</taxon>
        <taxon>Mammalia</taxon>
        <taxon>Eutheria</taxon>
        <taxon>Euarchontoglires</taxon>
        <taxon>Glires</taxon>
        <taxon>Rodentia</taxon>
        <taxon>Myomorpha</taxon>
        <taxon>Muroidea</taxon>
        <taxon>Muridae</taxon>
        <taxon>Murinae</taxon>
        <taxon>Mus</taxon>
        <taxon>Mus</taxon>
    </lineage>
</organism>
<comment type="function">
    <text evidence="1 3">Spindle assembly factor required for normal assembly of mitotic spindles. Required for normal assembly of microtubules during apoptosis. Required for chromatin and/or kinetochore dependent microtubule nucleation. Mediates AURKA localization to spindle microtubules. Activates AURKA by promoting its autophosphorylation at 'Thr-288' and protects this residue against dephosphorylation. TPX2 is inactivated upon binding to importin-alpha. At the onset of mitosis, GOLGA2 interacts with importin-alpha, liberating TPX2 from importin-alpha, allowing TPX2 to activate AURKA kinase and stimulate local microtubule nucleation.</text>
</comment>
<comment type="subunit">
    <text evidence="1 3 4">Interacts with AURKA (PubMed:18663142). Interacts with importin-alpha; leading to inactivate TPX2 (By similarity). Interacts with HNRNPU; this interaction recruits HNRNPU to spindle microtubules (MTs) (By similarity). Interacts with BCL2L10 (PubMed:27753540). Interacts with KIF11 (By similarity).</text>
</comment>
<comment type="subcellular location">
    <subcellularLocation>
        <location evidence="1">Nucleus</location>
    </subcellularLocation>
    <subcellularLocation>
        <location evidence="4">Cytoplasm</location>
        <location evidence="4">Cytoskeleton</location>
        <location evidence="4">Spindle</location>
    </subcellularLocation>
    <subcellularLocation>
        <location evidence="1">Cytoplasm</location>
        <location evidence="1">Cytoskeleton</location>
        <location evidence="1">Spindle pole</location>
    </subcellularLocation>
    <text evidence="1">During mitosis it is strictly associated with the spindle pole and with the mitotic spindle, whereas during S and G2, it is diffusely distributed throughout the nucleus. Is released from the nucleus in apoptotic cells and is detected on apoptotic microtubules.</text>
</comment>
<comment type="developmental stage">
    <text evidence="4">Expressed during all phases of oocyte maturation; localized at the meiotic spindle and microtubule organizing center during meiosis.</text>
</comment>
<comment type="similarity">
    <text evidence="5">Belongs to the TPX2 family.</text>
</comment>
<feature type="chain" id="PRO_0000393112" description="Targeting protein for Xklp2">
    <location>
        <begin position="1"/>
        <end position="745"/>
    </location>
</feature>
<feature type="region of interest" description="Disordered" evidence="2">
    <location>
        <begin position="84"/>
        <end position="217"/>
    </location>
</feature>
<feature type="compositionally biased region" description="Polar residues" evidence="2">
    <location>
        <begin position="91"/>
        <end position="101"/>
    </location>
</feature>
<feature type="compositionally biased region" description="Polar residues" evidence="2">
    <location>
        <begin position="110"/>
        <end position="119"/>
    </location>
</feature>
<feature type="compositionally biased region" description="Basic and acidic residues" evidence="2">
    <location>
        <begin position="126"/>
        <end position="137"/>
    </location>
</feature>
<feature type="compositionally biased region" description="Basic and acidic residues" evidence="2">
    <location>
        <begin position="182"/>
        <end position="192"/>
    </location>
</feature>
<feature type="compositionally biased region" description="Basic and acidic residues" evidence="2">
    <location>
        <begin position="204"/>
        <end position="217"/>
    </location>
</feature>
<feature type="modified residue" description="Phosphothreonine" evidence="6">
    <location>
        <position position="72"/>
    </location>
</feature>
<feature type="modified residue" description="Phosphoserine" evidence="1">
    <location>
        <position position="121"/>
    </location>
</feature>
<feature type="modified residue" description="Phosphoserine" evidence="1">
    <location>
        <position position="125"/>
    </location>
</feature>
<feature type="modified residue" description="N6-acetyllysine" evidence="9">
    <location>
        <position position="128"/>
    </location>
</feature>
<feature type="modified residue" description="Phosphoserine" evidence="1">
    <location>
        <position position="294"/>
    </location>
</feature>
<feature type="modified residue" description="N6-acetyllysine" evidence="1">
    <location>
        <position position="307"/>
    </location>
</feature>
<feature type="modified residue" description="Phosphoserine" evidence="1">
    <location>
        <position position="312"/>
    </location>
</feature>
<feature type="modified residue" description="Phosphothreonine" evidence="1">
    <location>
        <position position="340"/>
    </location>
</feature>
<feature type="modified residue" description="Phosphoserine" evidence="1">
    <location>
        <position position="359"/>
    </location>
</feature>
<feature type="modified residue" description="Phosphothreonine" evidence="1">
    <location>
        <position position="369"/>
    </location>
</feature>
<feature type="modified residue" description="N6-acetyllysine" evidence="9">
    <location>
        <position position="375"/>
    </location>
</feature>
<feature type="modified residue" description="Phosphoserine" evidence="6 8">
    <location>
        <position position="486"/>
    </location>
</feature>
<feature type="modified residue" description="Phosphoserine" evidence="7 8">
    <location>
        <position position="737"/>
    </location>
</feature>
<feature type="cross-link" description="Glycyl lysine isopeptide (Lys-Gly) (interchain with G-Cter in SUMO2)" evidence="1">
    <location>
        <position position="477"/>
    </location>
</feature>
<feature type="cross-link" description="Glycyl lysine isopeptide (Lys-Gly) (interchain with G-Cter in SUMO2)" evidence="1">
    <location>
        <position position="500"/>
    </location>
</feature>
<feature type="cross-link" description="Glycyl lysine isopeptide (Lys-Gly) (interchain with G-Cter in SUMO2)" evidence="1">
    <location>
        <position position="640"/>
    </location>
</feature>
<feature type="cross-link" description="Glycyl lysine isopeptide (Lys-Gly) (interchain with G-Cter in SUMO2)" evidence="1">
    <location>
        <position position="739"/>
    </location>
</feature>
<feature type="mutagenesis site" description="Abolishes interaction with AURKA." evidence="3">
    <original>YSFD</original>
    <variation>ASAA</variation>
    <location>
        <begin position="8"/>
        <end position="11"/>
    </location>
</feature>
<feature type="sequence conflict" description="In Ref. 4; AAH60619." evidence="5" ref="4">
    <original>H</original>
    <variation>D</variation>
    <location>
        <position position="165"/>
    </location>
</feature>
<feature type="sequence conflict" description="In Ref. 1; BAE32280." evidence="5" ref="1">
    <original>E</original>
    <variation>K</variation>
    <location>
        <position position="453"/>
    </location>
</feature>
<feature type="sequence conflict" description="In Ref. 1; BAE32280." evidence="5" ref="1">
    <original>V</original>
    <variation>L</variation>
    <location>
        <position position="509"/>
    </location>
</feature>